<gene>
    <name evidence="1" type="primary">rplE</name>
    <name type="ordered locus">BRE_496</name>
</gene>
<accession>B5RPJ4</accession>
<keyword id="KW-0687">Ribonucleoprotein</keyword>
<keyword id="KW-0689">Ribosomal protein</keyword>
<keyword id="KW-0694">RNA-binding</keyword>
<keyword id="KW-0699">rRNA-binding</keyword>
<keyword id="KW-0820">tRNA-binding</keyword>
<protein>
    <recommendedName>
        <fullName evidence="1">Large ribosomal subunit protein uL5</fullName>
    </recommendedName>
    <alternativeName>
        <fullName evidence="2">50S ribosomal protein L5</fullName>
    </alternativeName>
</protein>
<name>RL5_BORRA</name>
<comment type="function">
    <text evidence="1">This is one of the proteins that bind and probably mediate the attachment of the 5S RNA into the large ribosomal subunit, where it forms part of the central protuberance. In the 70S ribosome it contacts protein S13 of the 30S subunit (bridge B1b), connecting the 2 subunits; this bridge is implicated in subunit movement. Contacts the P site tRNA; the 5S rRNA and some of its associated proteins might help stabilize positioning of ribosome-bound tRNAs.</text>
</comment>
<comment type="subunit">
    <text evidence="1">Part of the 50S ribosomal subunit; part of the 5S rRNA/L5/L18/L25 subcomplex. Contacts the 5S rRNA and the P site tRNA. Forms a bridge to the 30S subunit in the 70S ribosome.</text>
</comment>
<comment type="similarity">
    <text evidence="1">Belongs to the universal ribosomal protein uL5 family.</text>
</comment>
<dbReference type="EMBL" id="CP000993">
    <property type="protein sequence ID" value="ACH94728.1"/>
    <property type="molecule type" value="Genomic_DNA"/>
</dbReference>
<dbReference type="RefSeq" id="WP_012538244.1">
    <property type="nucleotide sequence ID" value="NZ_CP169983.1"/>
</dbReference>
<dbReference type="SMR" id="B5RPJ4"/>
<dbReference type="KEGG" id="bre:BRE_496"/>
<dbReference type="HOGENOM" id="CLU_061015_2_1_12"/>
<dbReference type="Proteomes" id="UP000000612">
    <property type="component" value="Chromosome"/>
</dbReference>
<dbReference type="GO" id="GO:1990904">
    <property type="term" value="C:ribonucleoprotein complex"/>
    <property type="evidence" value="ECO:0007669"/>
    <property type="project" value="UniProtKB-KW"/>
</dbReference>
<dbReference type="GO" id="GO:0005840">
    <property type="term" value="C:ribosome"/>
    <property type="evidence" value="ECO:0007669"/>
    <property type="project" value="UniProtKB-KW"/>
</dbReference>
<dbReference type="GO" id="GO:0019843">
    <property type="term" value="F:rRNA binding"/>
    <property type="evidence" value="ECO:0007669"/>
    <property type="project" value="UniProtKB-UniRule"/>
</dbReference>
<dbReference type="GO" id="GO:0003735">
    <property type="term" value="F:structural constituent of ribosome"/>
    <property type="evidence" value="ECO:0007669"/>
    <property type="project" value="InterPro"/>
</dbReference>
<dbReference type="GO" id="GO:0000049">
    <property type="term" value="F:tRNA binding"/>
    <property type="evidence" value="ECO:0007669"/>
    <property type="project" value="UniProtKB-UniRule"/>
</dbReference>
<dbReference type="GO" id="GO:0006412">
    <property type="term" value="P:translation"/>
    <property type="evidence" value="ECO:0007669"/>
    <property type="project" value="UniProtKB-UniRule"/>
</dbReference>
<dbReference type="FunFam" id="3.30.1440.10:FF:000001">
    <property type="entry name" value="50S ribosomal protein L5"/>
    <property type="match status" value="1"/>
</dbReference>
<dbReference type="Gene3D" id="3.30.1440.10">
    <property type="match status" value="1"/>
</dbReference>
<dbReference type="HAMAP" id="MF_01333_B">
    <property type="entry name" value="Ribosomal_uL5_B"/>
    <property type="match status" value="1"/>
</dbReference>
<dbReference type="InterPro" id="IPR002132">
    <property type="entry name" value="Ribosomal_uL5"/>
</dbReference>
<dbReference type="InterPro" id="IPR020930">
    <property type="entry name" value="Ribosomal_uL5_bac-type"/>
</dbReference>
<dbReference type="InterPro" id="IPR031309">
    <property type="entry name" value="Ribosomal_uL5_C"/>
</dbReference>
<dbReference type="InterPro" id="IPR020929">
    <property type="entry name" value="Ribosomal_uL5_CS"/>
</dbReference>
<dbReference type="InterPro" id="IPR022803">
    <property type="entry name" value="Ribosomal_uL5_dom_sf"/>
</dbReference>
<dbReference type="InterPro" id="IPR031310">
    <property type="entry name" value="Ribosomal_uL5_N"/>
</dbReference>
<dbReference type="NCBIfam" id="NF000585">
    <property type="entry name" value="PRK00010.1"/>
    <property type="match status" value="1"/>
</dbReference>
<dbReference type="PANTHER" id="PTHR11994">
    <property type="entry name" value="60S RIBOSOMAL PROTEIN L11-RELATED"/>
    <property type="match status" value="1"/>
</dbReference>
<dbReference type="Pfam" id="PF00281">
    <property type="entry name" value="Ribosomal_L5"/>
    <property type="match status" value="1"/>
</dbReference>
<dbReference type="Pfam" id="PF00673">
    <property type="entry name" value="Ribosomal_L5_C"/>
    <property type="match status" value="1"/>
</dbReference>
<dbReference type="PIRSF" id="PIRSF002161">
    <property type="entry name" value="Ribosomal_L5"/>
    <property type="match status" value="1"/>
</dbReference>
<dbReference type="SUPFAM" id="SSF55282">
    <property type="entry name" value="RL5-like"/>
    <property type="match status" value="1"/>
</dbReference>
<dbReference type="PROSITE" id="PS00358">
    <property type="entry name" value="RIBOSOMAL_L5"/>
    <property type="match status" value="1"/>
</dbReference>
<feature type="chain" id="PRO_1000142361" description="Large ribosomal subunit protein uL5">
    <location>
        <begin position="1"/>
        <end position="182"/>
    </location>
</feature>
<organism>
    <name type="scientific">Borrelia recurrentis (strain A1)</name>
    <dbReference type="NCBI Taxonomy" id="412418"/>
    <lineage>
        <taxon>Bacteria</taxon>
        <taxon>Pseudomonadati</taxon>
        <taxon>Spirochaetota</taxon>
        <taxon>Spirochaetia</taxon>
        <taxon>Spirochaetales</taxon>
        <taxon>Borreliaceae</taxon>
        <taxon>Borrelia</taxon>
    </lineage>
</organism>
<sequence>MSYIPELKRRYRDNIVKELVSEFQYKSIMQAPKIEKIVVSMGVGDAVKNKKLLDSAVMELSQITGQKAVKTKAKKAISGFKIRQGQEIGAKVTLRGNMMYEFLYKLVNLALPRVKDFRGINGNAFDGNGNCSFGIAEQIIFSEIDYDKIERISGLNVTIVTTALNDKEGKALLAKFGMPFSN</sequence>
<evidence type="ECO:0000255" key="1">
    <source>
        <dbReference type="HAMAP-Rule" id="MF_01333"/>
    </source>
</evidence>
<evidence type="ECO:0000305" key="2"/>
<reference key="1">
    <citation type="journal article" date="2008" name="PLoS Genet.">
        <title>The genome of Borrelia recurrentis, the agent of deadly louse-borne relapsing fever, is a degraded subset of tick-borne Borrelia duttonii.</title>
        <authorList>
            <person name="Lescot M."/>
            <person name="Audic S."/>
            <person name="Robert C."/>
            <person name="Nguyen T.T."/>
            <person name="Blanc G."/>
            <person name="Cutler S.J."/>
            <person name="Wincker P."/>
            <person name="Couloux A."/>
            <person name="Claverie J.-M."/>
            <person name="Raoult D."/>
            <person name="Drancourt M."/>
        </authorList>
    </citation>
    <scope>NUCLEOTIDE SEQUENCE [LARGE SCALE GENOMIC DNA]</scope>
    <source>
        <strain>A1</strain>
    </source>
</reference>
<proteinExistence type="inferred from homology"/>